<evidence type="ECO:0000255" key="1">
    <source>
        <dbReference type="HAMAP-Rule" id="MF_00071"/>
    </source>
</evidence>
<name>LEPA_METPB</name>
<feature type="chain" id="PRO_1000117028" description="Elongation factor 4">
    <location>
        <begin position="1"/>
        <end position="601"/>
    </location>
</feature>
<feature type="domain" description="tr-type G">
    <location>
        <begin position="7"/>
        <end position="189"/>
    </location>
</feature>
<feature type="binding site" evidence="1">
    <location>
        <begin position="19"/>
        <end position="24"/>
    </location>
    <ligand>
        <name>GTP</name>
        <dbReference type="ChEBI" id="CHEBI:37565"/>
    </ligand>
</feature>
<feature type="binding site" evidence="1">
    <location>
        <begin position="136"/>
        <end position="139"/>
    </location>
    <ligand>
        <name>GTP</name>
        <dbReference type="ChEBI" id="CHEBI:37565"/>
    </ligand>
</feature>
<keyword id="KW-0997">Cell inner membrane</keyword>
<keyword id="KW-1003">Cell membrane</keyword>
<keyword id="KW-0342">GTP-binding</keyword>
<keyword id="KW-0378">Hydrolase</keyword>
<keyword id="KW-0472">Membrane</keyword>
<keyword id="KW-0547">Nucleotide-binding</keyword>
<keyword id="KW-0648">Protein biosynthesis</keyword>
<comment type="function">
    <text evidence="1">Required for accurate and efficient protein synthesis under certain stress conditions. May act as a fidelity factor of the translation reaction, by catalyzing a one-codon backward translocation of tRNAs on improperly translocated ribosomes. Back-translocation proceeds from a post-translocation (POST) complex to a pre-translocation (PRE) complex, thus giving elongation factor G a second chance to translocate the tRNAs correctly. Binds to ribosomes in a GTP-dependent manner.</text>
</comment>
<comment type="catalytic activity">
    <reaction evidence="1">
        <text>GTP + H2O = GDP + phosphate + H(+)</text>
        <dbReference type="Rhea" id="RHEA:19669"/>
        <dbReference type="ChEBI" id="CHEBI:15377"/>
        <dbReference type="ChEBI" id="CHEBI:15378"/>
        <dbReference type="ChEBI" id="CHEBI:37565"/>
        <dbReference type="ChEBI" id="CHEBI:43474"/>
        <dbReference type="ChEBI" id="CHEBI:58189"/>
        <dbReference type="EC" id="3.6.5.n1"/>
    </reaction>
</comment>
<comment type="subcellular location">
    <subcellularLocation>
        <location evidence="1">Cell inner membrane</location>
        <topology evidence="1">Peripheral membrane protein</topology>
        <orientation evidence="1">Cytoplasmic side</orientation>
    </subcellularLocation>
</comment>
<comment type="similarity">
    <text evidence="1">Belongs to the TRAFAC class translation factor GTPase superfamily. Classic translation factor GTPase family. LepA subfamily.</text>
</comment>
<sequence length="601" mass="66947">MTTRTIDNIRNFSIVAHIDHGKSTLADRLIQQTGTVALRDMSEQMLDSMDIERERGITIKANTVRLEYKAEDGQDYVLNLMDTPGHVDFAYEVSRSLAACEGSLLVVDASQGVEAQTLANVYQALDANHEIVPVLNKVDLPAAEPDRVKEQIEEVIGLDASEAVPISAKTGLNIEAVLEAIVKRLPPPKGDREAPLKALLVDSWYDVYLGVVVLVRIVDGVLKKGMTIRMMGADAAYGVDRIGVFRPKMADIGELGPGEVGFFTGSIKEVADTRVGDTITEDKRQTTQMLPGFKEVQAVVFCGLFPVDAADFENLRGAMGKLRLNDASFSYEMETSAALGFGFRCGFLGLLHLEIIQERLEREFNLDLISTAPSVVYRLMMRDGELKELHNPADMPDPMKIETVEEPWIRATILTPDDYLGGVLKLCQDRRGIQIDLNYVGKRAMVVYDLPLNEVVFDFYDRLKSISKGYASFDYHVSDYREGDLVKMSILVNAEPVDALSMLVHRTRAESRGRAMCEKLKDLIPRHLFQIPVQAAIGGKIIARETIRALSKDVTAKCYGGDISRKRKLLDKQKEGKKRMRQFGRVEIPQEAFIAALKMDD</sequence>
<dbReference type="EC" id="3.6.5.n1" evidence="1"/>
<dbReference type="EMBL" id="CP001029">
    <property type="protein sequence ID" value="ACB79353.1"/>
    <property type="molecule type" value="Genomic_DNA"/>
</dbReference>
<dbReference type="RefSeq" id="WP_012453102.1">
    <property type="nucleotide sequence ID" value="NC_010725.1"/>
</dbReference>
<dbReference type="SMR" id="B1ZC10"/>
<dbReference type="STRING" id="441620.Mpop_1181"/>
<dbReference type="KEGG" id="mpo:Mpop_1181"/>
<dbReference type="eggNOG" id="COG0481">
    <property type="taxonomic scope" value="Bacteria"/>
</dbReference>
<dbReference type="HOGENOM" id="CLU_009995_3_3_5"/>
<dbReference type="OrthoDB" id="9802948at2"/>
<dbReference type="Proteomes" id="UP000007136">
    <property type="component" value="Chromosome"/>
</dbReference>
<dbReference type="GO" id="GO:0005886">
    <property type="term" value="C:plasma membrane"/>
    <property type="evidence" value="ECO:0007669"/>
    <property type="project" value="UniProtKB-SubCell"/>
</dbReference>
<dbReference type="GO" id="GO:0005525">
    <property type="term" value="F:GTP binding"/>
    <property type="evidence" value="ECO:0007669"/>
    <property type="project" value="UniProtKB-UniRule"/>
</dbReference>
<dbReference type="GO" id="GO:0003924">
    <property type="term" value="F:GTPase activity"/>
    <property type="evidence" value="ECO:0007669"/>
    <property type="project" value="UniProtKB-UniRule"/>
</dbReference>
<dbReference type="GO" id="GO:0097216">
    <property type="term" value="F:guanosine tetraphosphate binding"/>
    <property type="evidence" value="ECO:0007669"/>
    <property type="project" value="UniProtKB-ARBA"/>
</dbReference>
<dbReference type="GO" id="GO:0043022">
    <property type="term" value="F:ribosome binding"/>
    <property type="evidence" value="ECO:0007669"/>
    <property type="project" value="UniProtKB-UniRule"/>
</dbReference>
<dbReference type="GO" id="GO:0003746">
    <property type="term" value="F:translation elongation factor activity"/>
    <property type="evidence" value="ECO:0007669"/>
    <property type="project" value="UniProtKB-UniRule"/>
</dbReference>
<dbReference type="GO" id="GO:0045727">
    <property type="term" value="P:positive regulation of translation"/>
    <property type="evidence" value="ECO:0007669"/>
    <property type="project" value="UniProtKB-UniRule"/>
</dbReference>
<dbReference type="CDD" id="cd03699">
    <property type="entry name" value="EF4_II"/>
    <property type="match status" value="1"/>
</dbReference>
<dbReference type="CDD" id="cd16260">
    <property type="entry name" value="EF4_III"/>
    <property type="match status" value="1"/>
</dbReference>
<dbReference type="CDD" id="cd01890">
    <property type="entry name" value="LepA"/>
    <property type="match status" value="1"/>
</dbReference>
<dbReference type="CDD" id="cd03709">
    <property type="entry name" value="lepA_C"/>
    <property type="match status" value="1"/>
</dbReference>
<dbReference type="FunFam" id="3.40.50.300:FF:000078">
    <property type="entry name" value="Elongation factor 4"/>
    <property type="match status" value="1"/>
</dbReference>
<dbReference type="FunFam" id="2.40.30.10:FF:000015">
    <property type="entry name" value="Translation factor GUF1, mitochondrial"/>
    <property type="match status" value="1"/>
</dbReference>
<dbReference type="FunFam" id="3.30.70.240:FF:000007">
    <property type="entry name" value="Translation factor GUF1, mitochondrial"/>
    <property type="match status" value="1"/>
</dbReference>
<dbReference type="FunFam" id="3.30.70.2570:FF:000001">
    <property type="entry name" value="Translation factor GUF1, mitochondrial"/>
    <property type="match status" value="1"/>
</dbReference>
<dbReference type="FunFam" id="3.30.70.870:FF:000004">
    <property type="entry name" value="Translation factor GUF1, mitochondrial"/>
    <property type="match status" value="1"/>
</dbReference>
<dbReference type="Gene3D" id="3.30.70.240">
    <property type="match status" value="1"/>
</dbReference>
<dbReference type="Gene3D" id="3.30.70.2570">
    <property type="entry name" value="Elongation factor 4, C-terminal domain"/>
    <property type="match status" value="1"/>
</dbReference>
<dbReference type="Gene3D" id="3.30.70.870">
    <property type="entry name" value="Elongation Factor G (Translational Gtpase), domain 3"/>
    <property type="match status" value="1"/>
</dbReference>
<dbReference type="Gene3D" id="3.40.50.300">
    <property type="entry name" value="P-loop containing nucleotide triphosphate hydrolases"/>
    <property type="match status" value="1"/>
</dbReference>
<dbReference type="Gene3D" id="2.40.30.10">
    <property type="entry name" value="Translation factors"/>
    <property type="match status" value="1"/>
</dbReference>
<dbReference type="HAMAP" id="MF_00071">
    <property type="entry name" value="LepA"/>
    <property type="match status" value="1"/>
</dbReference>
<dbReference type="InterPro" id="IPR006297">
    <property type="entry name" value="EF-4"/>
</dbReference>
<dbReference type="InterPro" id="IPR035647">
    <property type="entry name" value="EFG_III/V"/>
</dbReference>
<dbReference type="InterPro" id="IPR000640">
    <property type="entry name" value="EFG_V-like"/>
</dbReference>
<dbReference type="InterPro" id="IPR004161">
    <property type="entry name" value="EFTu-like_2"/>
</dbReference>
<dbReference type="InterPro" id="IPR031157">
    <property type="entry name" value="G_TR_CS"/>
</dbReference>
<dbReference type="InterPro" id="IPR038363">
    <property type="entry name" value="LepA_C_sf"/>
</dbReference>
<dbReference type="InterPro" id="IPR013842">
    <property type="entry name" value="LepA_CTD"/>
</dbReference>
<dbReference type="InterPro" id="IPR035654">
    <property type="entry name" value="LepA_IV"/>
</dbReference>
<dbReference type="InterPro" id="IPR027417">
    <property type="entry name" value="P-loop_NTPase"/>
</dbReference>
<dbReference type="InterPro" id="IPR005225">
    <property type="entry name" value="Small_GTP-bd"/>
</dbReference>
<dbReference type="InterPro" id="IPR000795">
    <property type="entry name" value="T_Tr_GTP-bd_dom"/>
</dbReference>
<dbReference type="NCBIfam" id="TIGR01393">
    <property type="entry name" value="lepA"/>
    <property type="match status" value="1"/>
</dbReference>
<dbReference type="NCBIfam" id="TIGR00231">
    <property type="entry name" value="small_GTP"/>
    <property type="match status" value="1"/>
</dbReference>
<dbReference type="PANTHER" id="PTHR43512:SF4">
    <property type="entry name" value="TRANSLATION FACTOR GUF1 HOMOLOG, CHLOROPLASTIC"/>
    <property type="match status" value="1"/>
</dbReference>
<dbReference type="PANTHER" id="PTHR43512">
    <property type="entry name" value="TRANSLATION FACTOR GUF1-RELATED"/>
    <property type="match status" value="1"/>
</dbReference>
<dbReference type="Pfam" id="PF00679">
    <property type="entry name" value="EFG_C"/>
    <property type="match status" value="1"/>
</dbReference>
<dbReference type="Pfam" id="PF00009">
    <property type="entry name" value="GTP_EFTU"/>
    <property type="match status" value="1"/>
</dbReference>
<dbReference type="Pfam" id="PF03144">
    <property type="entry name" value="GTP_EFTU_D2"/>
    <property type="match status" value="1"/>
</dbReference>
<dbReference type="Pfam" id="PF06421">
    <property type="entry name" value="LepA_C"/>
    <property type="match status" value="1"/>
</dbReference>
<dbReference type="PRINTS" id="PR00315">
    <property type="entry name" value="ELONGATNFCT"/>
</dbReference>
<dbReference type="SMART" id="SM00838">
    <property type="entry name" value="EFG_C"/>
    <property type="match status" value="1"/>
</dbReference>
<dbReference type="SUPFAM" id="SSF54980">
    <property type="entry name" value="EF-G C-terminal domain-like"/>
    <property type="match status" value="2"/>
</dbReference>
<dbReference type="SUPFAM" id="SSF52540">
    <property type="entry name" value="P-loop containing nucleoside triphosphate hydrolases"/>
    <property type="match status" value="1"/>
</dbReference>
<dbReference type="PROSITE" id="PS00301">
    <property type="entry name" value="G_TR_1"/>
    <property type="match status" value="1"/>
</dbReference>
<dbReference type="PROSITE" id="PS51722">
    <property type="entry name" value="G_TR_2"/>
    <property type="match status" value="1"/>
</dbReference>
<gene>
    <name evidence="1" type="primary">lepA</name>
    <name type="ordered locus">Mpop_1181</name>
</gene>
<accession>B1ZC10</accession>
<proteinExistence type="inferred from homology"/>
<organism>
    <name type="scientific">Methylorubrum populi (strain ATCC BAA-705 / NCIMB 13946 / BJ001)</name>
    <name type="common">Methylobacterium populi</name>
    <dbReference type="NCBI Taxonomy" id="441620"/>
    <lineage>
        <taxon>Bacteria</taxon>
        <taxon>Pseudomonadati</taxon>
        <taxon>Pseudomonadota</taxon>
        <taxon>Alphaproteobacteria</taxon>
        <taxon>Hyphomicrobiales</taxon>
        <taxon>Methylobacteriaceae</taxon>
        <taxon>Methylorubrum</taxon>
    </lineage>
</organism>
<reference key="1">
    <citation type="submission" date="2008-04" db="EMBL/GenBank/DDBJ databases">
        <title>Complete sequence of chromosome of Methylobacterium populi BJ001.</title>
        <authorList>
            <consortium name="US DOE Joint Genome Institute"/>
            <person name="Copeland A."/>
            <person name="Lucas S."/>
            <person name="Lapidus A."/>
            <person name="Glavina del Rio T."/>
            <person name="Dalin E."/>
            <person name="Tice H."/>
            <person name="Bruce D."/>
            <person name="Goodwin L."/>
            <person name="Pitluck S."/>
            <person name="Chertkov O."/>
            <person name="Brettin T."/>
            <person name="Detter J.C."/>
            <person name="Han C."/>
            <person name="Kuske C.R."/>
            <person name="Schmutz J."/>
            <person name="Larimer F."/>
            <person name="Land M."/>
            <person name="Hauser L."/>
            <person name="Kyrpides N."/>
            <person name="Mikhailova N."/>
            <person name="Marx C."/>
            <person name="Richardson P."/>
        </authorList>
    </citation>
    <scope>NUCLEOTIDE SEQUENCE [LARGE SCALE GENOMIC DNA]</scope>
    <source>
        <strain>ATCC BAA-705 / NCIMB 13946 / BJ001</strain>
    </source>
</reference>
<protein>
    <recommendedName>
        <fullName evidence="1">Elongation factor 4</fullName>
        <shortName evidence="1">EF-4</shortName>
        <ecNumber evidence="1">3.6.5.n1</ecNumber>
    </recommendedName>
    <alternativeName>
        <fullName evidence="1">Ribosomal back-translocase LepA</fullName>
    </alternativeName>
</protein>